<reference key="1">
    <citation type="submission" date="2008-07" db="EMBL/GenBank/DDBJ databases">
        <title>Complete sequence of Geobacter bemidjiensis BEM.</title>
        <authorList>
            <consortium name="US DOE Joint Genome Institute"/>
            <person name="Lucas S."/>
            <person name="Copeland A."/>
            <person name="Lapidus A."/>
            <person name="Glavina del Rio T."/>
            <person name="Dalin E."/>
            <person name="Tice H."/>
            <person name="Bruce D."/>
            <person name="Goodwin L."/>
            <person name="Pitluck S."/>
            <person name="Kiss H."/>
            <person name="Brettin T."/>
            <person name="Detter J.C."/>
            <person name="Han C."/>
            <person name="Kuske C.R."/>
            <person name="Schmutz J."/>
            <person name="Larimer F."/>
            <person name="Land M."/>
            <person name="Hauser L."/>
            <person name="Kyrpides N."/>
            <person name="Lykidis A."/>
            <person name="Lovley D."/>
            <person name="Richardson P."/>
        </authorList>
    </citation>
    <scope>NUCLEOTIDE SEQUENCE [LARGE SCALE GENOMIC DNA]</scope>
    <source>
        <strain>ATCC BAA-1014 / DSM 16622 / JCM 12645 / Bem</strain>
    </source>
</reference>
<feature type="chain" id="PRO_1000091816" description="2-dehydro-3-deoxyphosphooctonate aldolase">
    <location>
        <begin position="1"/>
        <end position="273"/>
    </location>
</feature>
<organism>
    <name type="scientific">Citrifermentans bemidjiense (strain ATCC BAA-1014 / DSM 16622 / JCM 12645 / Bem)</name>
    <name type="common">Geobacter bemidjiensis</name>
    <dbReference type="NCBI Taxonomy" id="404380"/>
    <lineage>
        <taxon>Bacteria</taxon>
        <taxon>Pseudomonadati</taxon>
        <taxon>Thermodesulfobacteriota</taxon>
        <taxon>Desulfuromonadia</taxon>
        <taxon>Geobacterales</taxon>
        <taxon>Geobacteraceae</taxon>
        <taxon>Citrifermentans</taxon>
    </lineage>
</organism>
<sequence length="273" mass="29172">MTREITVGGVKIGGGRPLALVAGPCVIENETATLRCAERLMSICNGVGISLIFKASYDKANRTSVTAFRGPGMKEGLRILAKVKEALGVPVLSDIHSIEQVEPAAEVLDVLQIPAFLCRQTDLLVAAGNTGKVINVKKGQFLAPWDMKNVVGKISSCDNDNIILTERGASFGYNNLVVDMRSFPIMRSTGYPVIFDATHSVQLPGGEGTSSGGQREYVEFLSRAAVAAGVDGIFMEVHEEPEQALCDGPNSVRLDDMPALLKKLKAIDAIVNQ</sequence>
<name>KDSA_CITBB</name>
<evidence type="ECO:0000255" key="1">
    <source>
        <dbReference type="HAMAP-Rule" id="MF_00056"/>
    </source>
</evidence>
<protein>
    <recommendedName>
        <fullName evidence="1">2-dehydro-3-deoxyphosphooctonate aldolase</fullName>
        <ecNumber evidence="1">2.5.1.55</ecNumber>
    </recommendedName>
    <alternativeName>
        <fullName evidence="1">3-deoxy-D-manno-octulosonic acid 8-phosphate synthase</fullName>
    </alternativeName>
    <alternativeName>
        <fullName evidence="1">KDO-8-phosphate synthase</fullName>
        <shortName evidence="1">KDO 8-P synthase</shortName>
        <shortName evidence="1">KDOPS</shortName>
    </alternativeName>
    <alternativeName>
        <fullName evidence="1">Phospho-2-dehydro-3-deoxyoctonate aldolase</fullName>
    </alternativeName>
</protein>
<dbReference type="EC" id="2.5.1.55" evidence="1"/>
<dbReference type="EMBL" id="CP001124">
    <property type="protein sequence ID" value="ACH38619.1"/>
    <property type="molecule type" value="Genomic_DNA"/>
</dbReference>
<dbReference type="RefSeq" id="WP_012530035.1">
    <property type="nucleotide sequence ID" value="NC_011146.1"/>
</dbReference>
<dbReference type="SMR" id="B5E8N4"/>
<dbReference type="STRING" id="404380.Gbem_1601"/>
<dbReference type="KEGG" id="gbm:Gbem_1601"/>
<dbReference type="eggNOG" id="COG2877">
    <property type="taxonomic scope" value="Bacteria"/>
</dbReference>
<dbReference type="HOGENOM" id="CLU_036666_0_0_7"/>
<dbReference type="OrthoDB" id="9802281at2"/>
<dbReference type="UniPathway" id="UPA00030"/>
<dbReference type="UniPathway" id="UPA00357">
    <property type="reaction ID" value="UER00474"/>
</dbReference>
<dbReference type="Proteomes" id="UP000008825">
    <property type="component" value="Chromosome"/>
</dbReference>
<dbReference type="GO" id="GO:0005737">
    <property type="term" value="C:cytoplasm"/>
    <property type="evidence" value="ECO:0007669"/>
    <property type="project" value="UniProtKB-SubCell"/>
</dbReference>
<dbReference type="GO" id="GO:0008676">
    <property type="term" value="F:3-deoxy-8-phosphooctulonate synthase activity"/>
    <property type="evidence" value="ECO:0007669"/>
    <property type="project" value="UniProtKB-UniRule"/>
</dbReference>
<dbReference type="GO" id="GO:0019294">
    <property type="term" value="P:keto-3-deoxy-D-manno-octulosonic acid biosynthetic process"/>
    <property type="evidence" value="ECO:0007669"/>
    <property type="project" value="UniProtKB-UniRule"/>
</dbReference>
<dbReference type="Gene3D" id="3.20.20.70">
    <property type="entry name" value="Aldolase class I"/>
    <property type="match status" value="1"/>
</dbReference>
<dbReference type="HAMAP" id="MF_00056">
    <property type="entry name" value="KDO8P_synth"/>
    <property type="match status" value="1"/>
</dbReference>
<dbReference type="InterPro" id="IPR013785">
    <property type="entry name" value="Aldolase_TIM"/>
</dbReference>
<dbReference type="InterPro" id="IPR006218">
    <property type="entry name" value="DAHP1/KDSA"/>
</dbReference>
<dbReference type="InterPro" id="IPR006269">
    <property type="entry name" value="KDO8P_synthase"/>
</dbReference>
<dbReference type="NCBIfam" id="TIGR01362">
    <property type="entry name" value="KDO8P_synth"/>
    <property type="match status" value="1"/>
</dbReference>
<dbReference type="NCBIfam" id="NF003543">
    <property type="entry name" value="PRK05198.1"/>
    <property type="match status" value="1"/>
</dbReference>
<dbReference type="PANTHER" id="PTHR21057">
    <property type="entry name" value="PHOSPHO-2-DEHYDRO-3-DEOXYHEPTONATE ALDOLASE"/>
    <property type="match status" value="1"/>
</dbReference>
<dbReference type="Pfam" id="PF00793">
    <property type="entry name" value="DAHP_synth_1"/>
    <property type="match status" value="1"/>
</dbReference>
<dbReference type="SUPFAM" id="SSF51569">
    <property type="entry name" value="Aldolase"/>
    <property type="match status" value="1"/>
</dbReference>
<accession>B5E8N4</accession>
<proteinExistence type="inferred from homology"/>
<keyword id="KW-0963">Cytoplasm</keyword>
<keyword id="KW-0448">Lipopolysaccharide biosynthesis</keyword>
<keyword id="KW-1185">Reference proteome</keyword>
<keyword id="KW-0808">Transferase</keyword>
<comment type="catalytic activity">
    <reaction evidence="1">
        <text>D-arabinose 5-phosphate + phosphoenolpyruvate + H2O = 3-deoxy-alpha-D-manno-2-octulosonate-8-phosphate + phosphate</text>
        <dbReference type="Rhea" id="RHEA:14053"/>
        <dbReference type="ChEBI" id="CHEBI:15377"/>
        <dbReference type="ChEBI" id="CHEBI:43474"/>
        <dbReference type="ChEBI" id="CHEBI:57693"/>
        <dbReference type="ChEBI" id="CHEBI:58702"/>
        <dbReference type="ChEBI" id="CHEBI:85985"/>
        <dbReference type="EC" id="2.5.1.55"/>
    </reaction>
</comment>
<comment type="pathway">
    <text evidence="1">Carbohydrate biosynthesis; 3-deoxy-D-manno-octulosonate biosynthesis; 3-deoxy-D-manno-octulosonate from D-ribulose 5-phosphate: step 2/3.</text>
</comment>
<comment type="pathway">
    <text evidence="1">Bacterial outer membrane biogenesis; lipopolysaccharide biosynthesis.</text>
</comment>
<comment type="subcellular location">
    <subcellularLocation>
        <location evidence="1">Cytoplasm</location>
    </subcellularLocation>
</comment>
<comment type="similarity">
    <text evidence="1">Belongs to the KdsA family.</text>
</comment>
<gene>
    <name evidence="1" type="primary">kdsA</name>
    <name type="ordered locus">Gbem_1601</name>
</gene>